<feature type="chain" id="PRO_0000393975" description="Enolase-phosphatase E1">
    <location>
        <begin position="1"/>
        <end position="723"/>
    </location>
</feature>
<feature type="region of interest" description="Disordered" evidence="2">
    <location>
        <begin position="239"/>
        <end position="723"/>
    </location>
</feature>
<feature type="compositionally biased region" description="Basic and acidic residues" evidence="2">
    <location>
        <begin position="262"/>
        <end position="284"/>
    </location>
</feature>
<feature type="compositionally biased region" description="Basic and acidic residues" evidence="2">
    <location>
        <begin position="293"/>
        <end position="308"/>
    </location>
</feature>
<feature type="compositionally biased region" description="Low complexity" evidence="2">
    <location>
        <begin position="311"/>
        <end position="320"/>
    </location>
</feature>
<feature type="compositionally biased region" description="Basic and acidic residues" evidence="2">
    <location>
        <begin position="322"/>
        <end position="406"/>
    </location>
</feature>
<feature type="compositionally biased region" description="Basic and acidic residues" evidence="2">
    <location>
        <begin position="419"/>
        <end position="443"/>
    </location>
</feature>
<feature type="compositionally biased region" description="Basic and acidic residues" evidence="2">
    <location>
        <begin position="468"/>
        <end position="479"/>
    </location>
</feature>
<feature type="compositionally biased region" description="Basic and acidic residues" evidence="2">
    <location>
        <begin position="487"/>
        <end position="496"/>
    </location>
</feature>
<feature type="compositionally biased region" description="Basic and acidic residues" evidence="2">
    <location>
        <begin position="511"/>
        <end position="565"/>
    </location>
</feature>
<feature type="compositionally biased region" description="Basic and acidic residues" evidence="2">
    <location>
        <begin position="577"/>
        <end position="593"/>
    </location>
</feature>
<feature type="compositionally biased region" description="Low complexity" evidence="2">
    <location>
        <begin position="596"/>
        <end position="606"/>
    </location>
</feature>
<feature type="compositionally biased region" description="Low complexity" evidence="2">
    <location>
        <begin position="636"/>
        <end position="647"/>
    </location>
</feature>
<feature type="compositionally biased region" description="Basic and acidic residues" evidence="2">
    <location>
        <begin position="653"/>
        <end position="666"/>
    </location>
</feature>
<feature type="binding site" evidence="1">
    <location>
        <begin position="126"/>
        <end position="127"/>
    </location>
    <ligand>
        <name>substrate</name>
    </ligand>
</feature>
<feature type="binding site" evidence="1">
    <location>
        <position position="160"/>
    </location>
    <ligand>
        <name>substrate</name>
    </ligand>
</feature>
<comment type="function">
    <text evidence="1">Bifunctional enzyme that catalyzes the enolization of 2,3-diketo-5-methylthiopentyl-1-phosphate (DK-MTP-1-P) into the intermediate 2-hydroxy-3-keto-5-methylthiopentenyl-1-phosphate (HK-MTPenyl-1-P), which is then dephosphorylated to form the acireductone 1,2-dihydroxy-3-keto-5-methylthiopentene (DHK-MTPene).</text>
</comment>
<comment type="catalytic activity">
    <reaction>
        <text>5-methylsulfanyl-2,3-dioxopentyl phosphate + H2O = 1,2-dihydroxy-5-(methylsulfanyl)pent-1-en-3-one + phosphate</text>
        <dbReference type="Rhea" id="RHEA:21700"/>
        <dbReference type="ChEBI" id="CHEBI:15377"/>
        <dbReference type="ChEBI" id="CHEBI:43474"/>
        <dbReference type="ChEBI" id="CHEBI:49252"/>
        <dbReference type="ChEBI" id="CHEBI:58828"/>
        <dbReference type="EC" id="3.1.3.77"/>
    </reaction>
</comment>
<comment type="pathway">
    <text>Amino-acid biosynthesis; L-methionine biosynthesis via salvage pathway; L-methionine from S-methyl-5-thio-alpha-D-ribose 1-phosphate: step 3/6.</text>
</comment>
<comment type="pathway">
    <text>Amino-acid biosynthesis; L-methionine biosynthesis via salvage pathway; L-methionine from S-methyl-5-thio-alpha-D-ribose 1-phosphate: step 4/6.</text>
</comment>
<comment type="subunit">
    <text evidence="1">Monomer.</text>
</comment>
<comment type="subcellular location">
    <subcellularLocation>
        <location evidence="1">Cytoplasm</location>
    </subcellularLocation>
    <subcellularLocation>
        <location evidence="1">Nucleus</location>
    </subcellularLocation>
</comment>
<comment type="similarity">
    <text evidence="3">Belongs to the HAD-like hydrolase superfamily. MasA/MtnC family.</text>
</comment>
<dbReference type="EC" id="3.1.3.77"/>
<dbReference type="EMBL" id="DS232039">
    <property type="protein sequence ID" value="EDS32831.1"/>
    <property type="molecule type" value="Genomic_DNA"/>
</dbReference>
<dbReference type="RefSeq" id="XP_001850944.1">
    <property type="nucleotide sequence ID" value="XM_001850892.1"/>
</dbReference>
<dbReference type="SMR" id="B0WQG0"/>
<dbReference type="STRING" id="7176.B0WQG0"/>
<dbReference type="EnsemblMetazoa" id="CPIJ009638-RA">
    <property type="protein sequence ID" value="CPIJ009638-PA"/>
    <property type="gene ID" value="CPIJ009638"/>
</dbReference>
<dbReference type="KEGG" id="cqu:CpipJ_CPIJ009638"/>
<dbReference type="VEuPathDB" id="VectorBase:CPIJ009638"/>
<dbReference type="VEuPathDB" id="VectorBase:CQUJHB012676"/>
<dbReference type="eggNOG" id="KOG2630">
    <property type="taxonomic scope" value="Eukaryota"/>
</dbReference>
<dbReference type="HOGENOM" id="CLU_382743_0_0_1"/>
<dbReference type="InParanoid" id="B0WQG0"/>
<dbReference type="OMA" id="IKAHVYE"/>
<dbReference type="OrthoDB" id="272500at2759"/>
<dbReference type="UniPathway" id="UPA00904">
    <property type="reaction ID" value="UER00876"/>
</dbReference>
<dbReference type="UniPathway" id="UPA00904">
    <property type="reaction ID" value="UER00877"/>
</dbReference>
<dbReference type="Proteomes" id="UP000002320">
    <property type="component" value="Unassembled WGS sequence"/>
</dbReference>
<dbReference type="GO" id="GO:0005737">
    <property type="term" value="C:cytoplasm"/>
    <property type="evidence" value="ECO:0007669"/>
    <property type="project" value="UniProtKB-SubCell"/>
</dbReference>
<dbReference type="GO" id="GO:0005634">
    <property type="term" value="C:nucleus"/>
    <property type="evidence" value="ECO:0007669"/>
    <property type="project" value="UniProtKB-SubCell"/>
</dbReference>
<dbReference type="GO" id="GO:0043874">
    <property type="term" value="F:acireductone synthase activity"/>
    <property type="evidence" value="ECO:0007669"/>
    <property type="project" value="UniProtKB-EC"/>
</dbReference>
<dbReference type="GO" id="GO:0000287">
    <property type="term" value="F:magnesium ion binding"/>
    <property type="evidence" value="ECO:0007669"/>
    <property type="project" value="InterPro"/>
</dbReference>
<dbReference type="GO" id="GO:0019509">
    <property type="term" value="P:L-methionine salvage from methylthioadenosine"/>
    <property type="evidence" value="ECO:0007669"/>
    <property type="project" value="UniProtKB-UniPathway"/>
</dbReference>
<dbReference type="FunFam" id="3.40.50.1000:FF:000079">
    <property type="entry name" value="Enolase-phosphatase E1"/>
    <property type="match status" value="1"/>
</dbReference>
<dbReference type="Gene3D" id="1.10.720.60">
    <property type="match status" value="1"/>
</dbReference>
<dbReference type="Gene3D" id="3.40.50.1000">
    <property type="entry name" value="HAD superfamily/HAD-like"/>
    <property type="match status" value="1"/>
</dbReference>
<dbReference type="InterPro" id="IPR023943">
    <property type="entry name" value="Enolase-ppase_E1"/>
</dbReference>
<dbReference type="InterPro" id="IPR036412">
    <property type="entry name" value="HAD-like_sf"/>
</dbReference>
<dbReference type="InterPro" id="IPR006439">
    <property type="entry name" value="HAD-SF_hydro_IA"/>
</dbReference>
<dbReference type="InterPro" id="IPR023214">
    <property type="entry name" value="HAD_sf"/>
</dbReference>
<dbReference type="NCBIfam" id="TIGR01691">
    <property type="entry name" value="enolase-ppase"/>
    <property type="match status" value="1"/>
</dbReference>
<dbReference type="NCBIfam" id="TIGR01549">
    <property type="entry name" value="HAD-SF-IA-v1"/>
    <property type="match status" value="1"/>
</dbReference>
<dbReference type="PANTHER" id="PTHR20371">
    <property type="entry name" value="ENOLASE-PHOSPHATASE E1"/>
    <property type="match status" value="1"/>
</dbReference>
<dbReference type="PANTHER" id="PTHR20371:SF1">
    <property type="entry name" value="ENOLASE-PHOSPHATASE E1"/>
    <property type="match status" value="1"/>
</dbReference>
<dbReference type="Pfam" id="PF00702">
    <property type="entry name" value="Hydrolase"/>
    <property type="match status" value="1"/>
</dbReference>
<dbReference type="SUPFAM" id="SSF56784">
    <property type="entry name" value="HAD-like"/>
    <property type="match status" value="1"/>
</dbReference>
<protein>
    <recommendedName>
        <fullName>Enolase-phosphatase E1</fullName>
        <ecNumber>3.1.3.77</ecNumber>
    </recommendedName>
    <alternativeName>
        <fullName>2,3-diketo-5-methylthio-1-phosphopentane phosphatase</fullName>
    </alternativeName>
</protein>
<name>ENOPH_CULQU</name>
<accession>B0WQG0</accession>
<gene>
    <name type="ORF">CPIJ009638</name>
</gene>
<keyword id="KW-0028">Amino-acid biosynthesis</keyword>
<keyword id="KW-0963">Cytoplasm</keyword>
<keyword id="KW-0378">Hydrolase</keyword>
<keyword id="KW-0486">Methionine biosynthesis</keyword>
<keyword id="KW-0539">Nucleus</keyword>
<keyword id="KW-1185">Reference proteome</keyword>
<proteinExistence type="inferred from homology"/>
<reference key="1">
    <citation type="submission" date="2007-03" db="EMBL/GenBank/DDBJ databases">
        <title>Annotation of Culex pipiens quinquefasciatus.</title>
        <authorList>
            <consortium name="The Broad Institute Genome Sequencing Platform"/>
            <person name="Atkinson P.W."/>
            <person name="Hemingway J."/>
            <person name="Christensen B.M."/>
            <person name="Higgs S."/>
            <person name="Kodira C.D."/>
            <person name="Hannick L.I."/>
            <person name="Megy K."/>
            <person name="O'Leary S.B."/>
            <person name="Pearson M."/>
            <person name="Haas B.J."/>
            <person name="Mauceli E."/>
            <person name="Wortman J.R."/>
            <person name="Lee N.H."/>
            <person name="Guigo R."/>
            <person name="Stanke M."/>
            <person name="Alvarado L."/>
            <person name="Amedeo P."/>
            <person name="Antoine C.H."/>
            <person name="Arensburger P."/>
            <person name="Bidwell S.L."/>
            <person name="Crawford M."/>
            <person name="Camaro F."/>
            <person name="Devon K."/>
            <person name="Engels R."/>
            <person name="Hammond M."/>
            <person name="Howarth C."/>
            <person name="Koehrsen M."/>
            <person name="Lawson D."/>
            <person name="Montgomery P."/>
            <person name="Nene V."/>
            <person name="Nusbaum C."/>
            <person name="Puiu D."/>
            <person name="Romero-Severson J."/>
            <person name="Severson D.W."/>
            <person name="Shumway M."/>
            <person name="Sisk P."/>
            <person name="Stolte C."/>
            <person name="Zeng Q."/>
            <person name="Eisenstadt E."/>
            <person name="Fraser-Liggett C.M."/>
            <person name="Strausberg R."/>
            <person name="Galagan J."/>
            <person name="Birren B."/>
            <person name="Collins F.H."/>
        </authorList>
    </citation>
    <scope>NUCLEOTIDE SEQUENCE [LARGE SCALE GENOMIC DNA]</scope>
    <source>
        <strain>JHB</strain>
    </source>
</reference>
<evidence type="ECO:0000250" key="1"/>
<evidence type="ECO:0000256" key="2">
    <source>
        <dbReference type="SAM" id="MobiDB-lite"/>
    </source>
</evidence>
<evidence type="ECO:0000305" key="3"/>
<organism>
    <name type="scientific">Culex quinquefasciatus</name>
    <name type="common">Southern house mosquito</name>
    <name type="synonym">Culex pungens</name>
    <dbReference type="NCBI Taxonomy" id="7176"/>
    <lineage>
        <taxon>Eukaryota</taxon>
        <taxon>Metazoa</taxon>
        <taxon>Ecdysozoa</taxon>
        <taxon>Arthropoda</taxon>
        <taxon>Hexapoda</taxon>
        <taxon>Insecta</taxon>
        <taxon>Pterygota</taxon>
        <taxon>Neoptera</taxon>
        <taxon>Endopterygota</taxon>
        <taxon>Diptera</taxon>
        <taxon>Nematocera</taxon>
        <taxon>Culicoidea</taxon>
        <taxon>Culicidae</taxon>
        <taxon>Culicinae</taxon>
        <taxon>Culicini</taxon>
        <taxon>Culex</taxon>
        <taxon>Culex</taxon>
    </lineage>
</organism>
<sequence length="723" mass="77070">MRYQQDTLFPYALKNVEEYLKANWNEDATKTVVAALREQADEDKKAEVEGALTIPAGDSEDIIPDIVKYVEWQTSRDAKTGSLKTLQGLVWAKGYKDGSIKGHVYDDVSKALEQWTEGGRKIYVYSSGSVDAQKMLFEHSEQGDLVKYLAGHYDTKIGAKTEKDSYEAILKNIEATAEEALFLTDVVAEAKAAKEAGLNVVVLERPGNAELSEDDRKEFTVVKSFADIPLESIVESANGAGAKRKIDEAQEEDEAQPPTKVVKKDENGDAAAKKDETAKVDEPAAKATNGDAAAKEEAAAPAEGKMEVDEAAAAAAPPADAAEEKKETEEAKPETEKVTEKTESTAAEKKEEDKKEEVAESKEAAPKEVVAEEAKKEEEVKAAAPAEEVKKVEEPVPAEAKKVVEEEKMEVDGGAEAVAEEKEAEKKEEDKAAEPAAEKKPAEEAVVTSTEEPAKEEPKVESSTAEAEPAKEKPAEAEAKAAPAETTKAEVVEKPAETPAAESMETDSEPSADKEAEAKPEAKPVEEVKKAEAEKKVEAEKKPAESEAEAKEVATKPVEETKGEETTTAGPVEEIAVEAKEDAAKPEEKKSDADEVSTTTTTTSTESKTENGTHENGVSKEATPVNGKEESRVPENGEAEPAAEAVVTSNGNGKHEEKGDSDKENDTATSNTTEEPAANGNGVENGSTTSSTTTPAPDAAAEIKSKKVIDSSTTPTPPIEAES</sequence>